<sequence>MRVADFSFELPEALIAHYPQPQRSGCRLLSLDGPTGTLTHGIFTDLLDKLAPGDLLVFNNTRVIPARLFGRKASGGKLEVLVERVLDDHRVLAHVKASKAPKPGAELLLGDDENIRATMLARHDTLFELRFDDERDVFTILNAVGHMPLPPYIDRPDEDADRELYQTVYSQRPGAVAAPTAGLHFDEPMLATLQEKGIEMAFVTLHVGAGTFQPVRVDTIEDHIMHSEYAEVPQEVVDAVLACKARGKRVVAVGTTSVRSLESAAKAAENGLIAPFFGDTRIFIYPGYHYQVVDALVTNFHLPESTLIMLVSAFAGYKNTMNAYQQAVAEQYRFFSYGDAMFISRNPRAPQEKVSP</sequence>
<keyword id="KW-0963">Cytoplasm</keyword>
<keyword id="KW-0671">Queuosine biosynthesis</keyword>
<keyword id="KW-0949">S-adenosyl-L-methionine</keyword>
<keyword id="KW-0808">Transferase</keyword>
<accession>B1JIF0</accession>
<dbReference type="EC" id="2.4.99.17" evidence="1"/>
<dbReference type="EMBL" id="CP000950">
    <property type="protein sequence ID" value="ACA69534.1"/>
    <property type="molecule type" value="Genomic_DNA"/>
</dbReference>
<dbReference type="RefSeq" id="WP_012304512.1">
    <property type="nucleotide sequence ID" value="NZ_CP009792.1"/>
</dbReference>
<dbReference type="SMR" id="B1JIF0"/>
<dbReference type="KEGG" id="ypy:YPK_3265"/>
<dbReference type="PATRIC" id="fig|502800.11.peg.3994"/>
<dbReference type="UniPathway" id="UPA00392"/>
<dbReference type="GO" id="GO:0005737">
    <property type="term" value="C:cytoplasm"/>
    <property type="evidence" value="ECO:0007669"/>
    <property type="project" value="UniProtKB-SubCell"/>
</dbReference>
<dbReference type="GO" id="GO:0051075">
    <property type="term" value="F:S-adenosylmethionine:tRNA ribosyltransferase-isomerase activity"/>
    <property type="evidence" value="ECO:0007669"/>
    <property type="project" value="UniProtKB-EC"/>
</dbReference>
<dbReference type="GO" id="GO:0008616">
    <property type="term" value="P:queuosine biosynthetic process"/>
    <property type="evidence" value="ECO:0007669"/>
    <property type="project" value="UniProtKB-UniRule"/>
</dbReference>
<dbReference type="GO" id="GO:0002099">
    <property type="term" value="P:tRNA wobble guanine modification"/>
    <property type="evidence" value="ECO:0007669"/>
    <property type="project" value="TreeGrafter"/>
</dbReference>
<dbReference type="FunFam" id="2.40.10.240:FF:000001">
    <property type="entry name" value="S-adenosylmethionine:tRNA ribosyltransferase-isomerase"/>
    <property type="match status" value="1"/>
</dbReference>
<dbReference type="FunFam" id="3.40.1780.10:FF:000001">
    <property type="entry name" value="S-adenosylmethionine:tRNA ribosyltransferase-isomerase"/>
    <property type="match status" value="1"/>
</dbReference>
<dbReference type="Gene3D" id="2.40.10.240">
    <property type="entry name" value="QueA-like"/>
    <property type="match status" value="1"/>
</dbReference>
<dbReference type="Gene3D" id="3.40.1780.10">
    <property type="entry name" value="QueA-like"/>
    <property type="match status" value="1"/>
</dbReference>
<dbReference type="HAMAP" id="MF_00113">
    <property type="entry name" value="QueA"/>
    <property type="match status" value="1"/>
</dbReference>
<dbReference type="InterPro" id="IPR003699">
    <property type="entry name" value="QueA"/>
</dbReference>
<dbReference type="InterPro" id="IPR042118">
    <property type="entry name" value="QueA_dom1"/>
</dbReference>
<dbReference type="InterPro" id="IPR042119">
    <property type="entry name" value="QueA_dom2"/>
</dbReference>
<dbReference type="InterPro" id="IPR036100">
    <property type="entry name" value="QueA_sf"/>
</dbReference>
<dbReference type="NCBIfam" id="NF001140">
    <property type="entry name" value="PRK00147.1"/>
    <property type="match status" value="1"/>
</dbReference>
<dbReference type="NCBIfam" id="TIGR00113">
    <property type="entry name" value="queA"/>
    <property type="match status" value="1"/>
</dbReference>
<dbReference type="PANTHER" id="PTHR30307">
    <property type="entry name" value="S-ADENOSYLMETHIONINE:TRNA RIBOSYLTRANSFERASE-ISOMERASE"/>
    <property type="match status" value="1"/>
</dbReference>
<dbReference type="PANTHER" id="PTHR30307:SF0">
    <property type="entry name" value="S-ADENOSYLMETHIONINE:TRNA RIBOSYLTRANSFERASE-ISOMERASE"/>
    <property type="match status" value="1"/>
</dbReference>
<dbReference type="Pfam" id="PF02547">
    <property type="entry name" value="Queuosine_synth"/>
    <property type="match status" value="1"/>
</dbReference>
<dbReference type="SUPFAM" id="SSF111337">
    <property type="entry name" value="QueA-like"/>
    <property type="match status" value="1"/>
</dbReference>
<proteinExistence type="inferred from homology"/>
<organism>
    <name type="scientific">Yersinia pseudotuberculosis serotype O:3 (strain YPIII)</name>
    <dbReference type="NCBI Taxonomy" id="502800"/>
    <lineage>
        <taxon>Bacteria</taxon>
        <taxon>Pseudomonadati</taxon>
        <taxon>Pseudomonadota</taxon>
        <taxon>Gammaproteobacteria</taxon>
        <taxon>Enterobacterales</taxon>
        <taxon>Yersiniaceae</taxon>
        <taxon>Yersinia</taxon>
    </lineage>
</organism>
<gene>
    <name evidence="1" type="primary">queA</name>
    <name type="ordered locus">YPK_3265</name>
</gene>
<protein>
    <recommendedName>
        <fullName evidence="1">S-adenosylmethionine:tRNA ribosyltransferase-isomerase</fullName>
        <ecNumber evidence="1">2.4.99.17</ecNumber>
    </recommendedName>
    <alternativeName>
        <fullName evidence="1">Queuosine biosynthesis protein QueA</fullName>
    </alternativeName>
</protein>
<evidence type="ECO:0000255" key="1">
    <source>
        <dbReference type="HAMAP-Rule" id="MF_00113"/>
    </source>
</evidence>
<name>QUEA_YERPY</name>
<feature type="chain" id="PRO_1000094835" description="S-adenosylmethionine:tRNA ribosyltransferase-isomerase">
    <location>
        <begin position="1"/>
        <end position="356"/>
    </location>
</feature>
<comment type="function">
    <text evidence="1">Transfers and isomerizes the ribose moiety from AdoMet to the 7-aminomethyl group of 7-deazaguanine (preQ1-tRNA) to give epoxyqueuosine (oQ-tRNA).</text>
</comment>
<comment type="catalytic activity">
    <reaction evidence="1">
        <text>7-aminomethyl-7-carbaguanosine(34) in tRNA + S-adenosyl-L-methionine = epoxyqueuosine(34) in tRNA + adenine + L-methionine + 2 H(+)</text>
        <dbReference type="Rhea" id="RHEA:32155"/>
        <dbReference type="Rhea" id="RHEA-COMP:10342"/>
        <dbReference type="Rhea" id="RHEA-COMP:18582"/>
        <dbReference type="ChEBI" id="CHEBI:15378"/>
        <dbReference type="ChEBI" id="CHEBI:16708"/>
        <dbReference type="ChEBI" id="CHEBI:57844"/>
        <dbReference type="ChEBI" id="CHEBI:59789"/>
        <dbReference type="ChEBI" id="CHEBI:82833"/>
        <dbReference type="ChEBI" id="CHEBI:194443"/>
        <dbReference type="EC" id="2.4.99.17"/>
    </reaction>
</comment>
<comment type="pathway">
    <text evidence="1">tRNA modification; tRNA-queuosine biosynthesis.</text>
</comment>
<comment type="subunit">
    <text evidence="1">Monomer.</text>
</comment>
<comment type="subcellular location">
    <subcellularLocation>
        <location evidence="1">Cytoplasm</location>
    </subcellularLocation>
</comment>
<comment type="similarity">
    <text evidence="1">Belongs to the QueA family.</text>
</comment>
<reference key="1">
    <citation type="submission" date="2008-02" db="EMBL/GenBank/DDBJ databases">
        <title>Complete sequence of Yersinia pseudotuberculosis YPIII.</title>
        <authorList>
            <consortium name="US DOE Joint Genome Institute"/>
            <person name="Copeland A."/>
            <person name="Lucas S."/>
            <person name="Lapidus A."/>
            <person name="Glavina del Rio T."/>
            <person name="Dalin E."/>
            <person name="Tice H."/>
            <person name="Bruce D."/>
            <person name="Goodwin L."/>
            <person name="Pitluck S."/>
            <person name="Munk A.C."/>
            <person name="Brettin T."/>
            <person name="Detter J.C."/>
            <person name="Han C."/>
            <person name="Tapia R."/>
            <person name="Schmutz J."/>
            <person name="Larimer F."/>
            <person name="Land M."/>
            <person name="Hauser L."/>
            <person name="Challacombe J.F."/>
            <person name="Green L."/>
            <person name="Lindler L.E."/>
            <person name="Nikolich M.P."/>
            <person name="Richardson P."/>
        </authorList>
    </citation>
    <scope>NUCLEOTIDE SEQUENCE [LARGE SCALE GENOMIC DNA]</scope>
    <source>
        <strain>YPIII</strain>
    </source>
</reference>